<proteinExistence type="evidence at protein level"/>
<comment type="function">
    <text evidence="1">Thiol-specific peroxidase that catalyzes the reduction of hydrogen peroxide and organic hydroperoxides to water and alcohols, respectively. Plays a role in cell protection against oxidative stress by detoxifying peroxides.</text>
</comment>
<comment type="catalytic activity">
    <reaction evidence="1">
        <text>a hydroperoxide + NADH + H(+) = an alcohol + NAD(+) + H2O</text>
        <dbReference type="Rhea" id="RHEA:62628"/>
        <dbReference type="ChEBI" id="CHEBI:15377"/>
        <dbReference type="ChEBI" id="CHEBI:15378"/>
        <dbReference type="ChEBI" id="CHEBI:30879"/>
        <dbReference type="ChEBI" id="CHEBI:35924"/>
        <dbReference type="ChEBI" id="CHEBI:57540"/>
        <dbReference type="ChEBI" id="CHEBI:57945"/>
        <dbReference type="EC" id="1.11.1.26"/>
    </reaction>
</comment>
<comment type="subunit">
    <text evidence="1">Homodimer; disulfide-linked, upon oxidation. 5 homodimers assemble to form a ring-like decamer.</text>
</comment>
<comment type="subcellular location">
    <subcellularLocation>
        <location evidence="2">Cytoplasm</location>
    </subcellularLocation>
</comment>
<comment type="miscellaneous">
    <text evidence="1">The active site is a conserved redox-active cysteine residue, the peroxidatic cysteine (C(P)), which makes the nucleophilic attack on the peroxide substrate. The peroxide oxidizes the C(P)-SH to cysteine sulfenic acid (C(P)-SOH), which then reacts with another cysteine residue, the resolving cysteine (C(R)), to form a disulfide bridge. The disulfide is subsequently reduced by an appropriate electron donor to complete the catalytic cycle. In this typical 2-Cys peroxiredoxin, C(R) is provided by the other dimeric subunit to form an intersubunit disulfide. The disulfide is subsequently reduced by AhpF.</text>
</comment>
<comment type="similarity">
    <text evidence="5">Belongs to the peroxiredoxin family. AhpC/Prx1 subfamily.</text>
</comment>
<name>AHPC_DELAC</name>
<evidence type="ECO:0000250" key="1">
    <source>
        <dbReference type="UniProtKB" id="P0A251"/>
    </source>
</evidence>
<evidence type="ECO:0000250" key="2">
    <source>
        <dbReference type="UniProtKB" id="P0AE08"/>
    </source>
</evidence>
<evidence type="ECO:0000269" key="3">
    <source>
    </source>
</evidence>
<evidence type="ECO:0000303" key="4">
    <source>
    </source>
</evidence>
<evidence type="ECO:0000305" key="5"/>
<gene>
    <name type="primary">ahpC</name>
</gene>
<feature type="chain" id="PRO_0000135114" description="Alkyl hydroperoxide reductase C">
    <location>
        <begin position="1"/>
        <end position="25" status="greater than"/>
    </location>
</feature>
<feature type="non-terminal residue" evidence="4">
    <location>
        <position position="25"/>
    </location>
</feature>
<protein>
    <recommendedName>
        <fullName>Alkyl hydroperoxide reductase C</fullName>
        <ecNumber evidence="1">1.11.1.26</ecNumber>
    </recommendedName>
    <alternativeName>
        <fullName>Peroxiredoxin</fullName>
    </alternativeName>
    <alternativeName>
        <fullName>Thioredoxin peroxidase</fullName>
    </alternativeName>
</protein>
<reference evidence="5" key="1">
    <citation type="journal article" date="2002" name="Microbiology">
        <title>Assimilatory detoxification of herbicides by Delftia acidovorans MC1: induction of two chlorocatechol 1,2-dioxygenases as a response to chemostress.</title>
        <authorList>
            <person name="Benndorf D."/>
            <person name="Babel W."/>
        </authorList>
    </citation>
    <scope>PROTEIN SEQUENCE</scope>
    <source>
        <strain evidence="3">MC1</strain>
    </source>
</reference>
<dbReference type="EC" id="1.11.1.26" evidence="1"/>
<dbReference type="SMR" id="P83117"/>
<dbReference type="GO" id="GO:0005737">
    <property type="term" value="C:cytoplasm"/>
    <property type="evidence" value="ECO:0007669"/>
    <property type="project" value="UniProtKB-SubCell"/>
</dbReference>
<dbReference type="GO" id="GO:0102039">
    <property type="term" value="F:NADH-dependent peroxiredoxin activity"/>
    <property type="evidence" value="ECO:0007669"/>
    <property type="project" value="UniProtKB-EC"/>
</dbReference>
<keyword id="KW-0049">Antioxidant</keyword>
<keyword id="KW-0963">Cytoplasm</keyword>
<keyword id="KW-0903">Direct protein sequencing</keyword>
<keyword id="KW-1015">Disulfide bond</keyword>
<keyword id="KW-0560">Oxidoreductase</keyword>
<keyword id="KW-0575">Peroxidase</keyword>
<keyword id="KW-0676">Redox-active center</keyword>
<accession>P83117</accession>
<organism evidence="5">
    <name type="scientific">Delftia acidovorans</name>
    <name type="common">Pseudomonas acidovorans</name>
    <name type="synonym">Comamonas acidovorans</name>
    <dbReference type="NCBI Taxonomy" id="80866"/>
    <lineage>
        <taxon>Bacteria</taxon>
        <taxon>Pseudomonadati</taxon>
        <taxon>Pseudomonadota</taxon>
        <taxon>Betaproteobacteria</taxon>
        <taxon>Burkholderiales</taxon>
        <taxon>Comamonadaceae</taxon>
        <taxon>Delftia</taxon>
    </lineage>
</organism>
<sequence>SVINTQIKPFKTQAFKNGKFIEVTE</sequence>